<proteinExistence type="inferred from homology"/>
<keyword id="KW-0227">DNA damage</keyword>
<keyword id="KW-0233">DNA recombination</keyword>
<keyword id="KW-0234">DNA repair</keyword>
<keyword id="KW-0479">Metal-binding</keyword>
<keyword id="KW-1185">Reference proteome</keyword>
<keyword id="KW-0862">Zinc</keyword>
<keyword id="KW-0863">Zinc-finger</keyword>
<comment type="function">
    <text evidence="1">May play a role in DNA repair. It seems to be involved in an RecBC-independent recombinational process of DNA repair. It may act with RecF and RecO.</text>
</comment>
<comment type="similarity">
    <text evidence="1">Belongs to the RecR family.</text>
</comment>
<reference key="1">
    <citation type="journal article" date="2007" name="Proc. Natl. Acad. Sci. U.S.A.">
        <title>The Orientia tsutsugamushi genome reveals massive proliferation of conjugative type IV secretion system and host-cell interaction genes.</title>
        <authorList>
            <person name="Cho N.-H."/>
            <person name="Kim H.-R."/>
            <person name="Lee J.-H."/>
            <person name="Kim S.-Y."/>
            <person name="Kim J."/>
            <person name="Cha S."/>
            <person name="Kim S.-Y."/>
            <person name="Darby A.C."/>
            <person name="Fuxelius H.-H."/>
            <person name="Yin J."/>
            <person name="Kim J.H."/>
            <person name="Kim J."/>
            <person name="Lee S.J."/>
            <person name="Koh Y.-S."/>
            <person name="Jang W.-J."/>
            <person name="Park K.-H."/>
            <person name="Andersson S.G.E."/>
            <person name="Choi M.-S."/>
            <person name="Kim I.-S."/>
        </authorList>
    </citation>
    <scope>NUCLEOTIDE SEQUENCE [LARGE SCALE GENOMIC DNA]</scope>
    <source>
        <strain>Boryong</strain>
    </source>
</reference>
<dbReference type="EMBL" id="AM494475">
    <property type="protein sequence ID" value="CAM79283.1"/>
    <property type="molecule type" value="Genomic_DNA"/>
</dbReference>
<dbReference type="RefSeq" id="WP_011944341.1">
    <property type="nucleotide sequence ID" value="NC_009488.1"/>
</dbReference>
<dbReference type="SMR" id="A5CCA2"/>
<dbReference type="KEGG" id="ots:OTBS_0217"/>
<dbReference type="eggNOG" id="COG0353">
    <property type="taxonomic scope" value="Bacteria"/>
</dbReference>
<dbReference type="HOGENOM" id="CLU_060739_1_1_5"/>
<dbReference type="Proteomes" id="UP000001565">
    <property type="component" value="Chromosome"/>
</dbReference>
<dbReference type="GO" id="GO:0003677">
    <property type="term" value="F:DNA binding"/>
    <property type="evidence" value="ECO:0007669"/>
    <property type="project" value="UniProtKB-UniRule"/>
</dbReference>
<dbReference type="GO" id="GO:0008270">
    <property type="term" value="F:zinc ion binding"/>
    <property type="evidence" value="ECO:0007669"/>
    <property type="project" value="UniProtKB-KW"/>
</dbReference>
<dbReference type="GO" id="GO:0006310">
    <property type="term" value="P:DNA recombination"/>
    <property type="evidence" value="ECO:0007669"/>
    <property type="project" value="UniProtKB-UniRule"/>
</dbReference>
<dbReference type="GO" id="GO:0006281">
    <property type="term" value="P:DNA repair"/>
    <property type="evidence" value="ECO:0007669"/>
    <property type="project" value="UniProtKB-UniRule"/>
</dbReference>
<dbReference type="CDD" id="cd01025">
    <property type="entry name" value="TOPRIM_recR"/>
    <property type="match status" value="1"/>
</dbReference>
<dbReference type="Gene3D" id="3.40.1360.10">
    <property type="match status" value="1"/>
</dbReference>
<dbReference type="Gene3D" id="1.10.8.420">
    <property type="entry name" value="RecR Domain 1"/>
    <property type="match status" value="1"/>
</dbReference>
<dbReference type="HAMAP" id="MF_00017">
    <property type="entry name" value="RecR"/>
    <property type="match status" value="1"/>
</dbReference>
<dbReference type="InterPro" id="IPR000093">
    <property type="entry name" value="DNA_Rcmb_RecR"/>
</dbReference>
<dbReference type="InterPro" id="IPR023627">
    <property type="entry name" value="Rcmb_RecR"/>
</dbReference>
<dbReference type="InterPro" id="IPR015967">
    <property type="entry name" value="Rcmb_RecR_Znf"/>
</dbReference>
<dbReference type="InterPro" id="IPR006171">
    <property type="entry name" value="TOPRIM_dom"/>
</dbReference>
<dbReference type="InterPro" id="IPR034137">
    <property type="entry name" value="TOPRIM_RecR"/>
</dbReference>
<dbReference type="NCBIfam" id="TIGR00615">
    <property type="entry name" value="recR"/>
    <property type="match status" value="1"/>
</dbReference>
<dbReference type="PANTHER" id="PTHR30446">
    <property type="entry name" value="RECOMBINATION PROTEIN RECR"/>
    <property type="match status" value="1"/>
</dbReference>
<dbReference type="PANTHER" id="PTHR30446:SF0">
    <property type="entry name" value="RECOMBINATION PROTEIN RECR"/>
    <property type="match status" value="1"/>
</dbReference>
<dbReference type="Pfam" id="PF21175">
    <property type="entry name" value="RecR_C"/>
    <property type="match status" value="1"/>
</dbReference>
<dbReference type="Pfam" id="PF21176">
    <property type="entry name" value="RecR_HhH"/>
    <property type="match status" value="1"/>
</dbReference>
<dbReference type="Pfam" id="PF13662">
    <property type="entry name" value="Toprim_4"/>
    <property type="match status" value="1"/>
</dbReference>
<dbReference type="SMART" id="SM00493">
    <property type="entry name" value="TOPRIM"/>
    <property type="match status" value="1"/>
</dbReference>
<dbReference type="SUPFAM" id="SSF111304">
    <property type="entry name" value="Recombination protein RecR"/>
    <property type="match status" value="1"/>
</dbReference>
<dbReference type="PROSITE" id="PS01300">
    <property type="entry name" value="RECR"/>
    <property type="match status" value="1"/>
</dbReference>
<dbReference type="PROSITE" id="PS50880">
    <property type="entry name" value="TOPRIM"/>
    <property type="match status" value="1"/>
</dbReference>
<protein>
    <recommendedName>
        <fullName evidence="1">Recombination protein RecR</fullName>
    </recommendedName>
</protein>
<sequence>MHKDSNIIEELIFSFAQLPGLGNRSARRIVLYLMQDKEVRIKNLNNQLTSVLNNIMECDYCGNLDVVSICNICRHSERDSSIIAIVESVADLWALERSKVFKGWYHVLGKTLSAVSGNDAINSLKLPKLLNRIREYKVQEIILATNSTIDGQMTAFFVIDYLKDENLKISKLASGIPLGGELDYLDEGTLLAAFKARQSHDLL</sequence>
<accession>A5CCA2</accession>
<name>RECR_ORITB</name>
<organism>
    <name type="scientific">Orientia tsutsugamushi (strain Boryong)</name>
    <name type="common">Rickettsia tsutsugamushi</name>
    <dbReference type="NCBI Taxonomy" id="357244"/>
    <lineage>
        <taxon>Bacteria</taxon>
        <taxon>Pseudomonadati</taxon>
        <taxon>Pseudomonadota</taxon>
        <taxon>Alphaproteobacteria</taxon>
        <taxon>Rickettsiales</taxon>
        <taxon>Rickettsiaceae</taxon>
        <taxon>Rickettsieae</taxon>
        <taxon>Orientia</taxon>
    </lineage>
</organism>
<gene>
    <name evidence="1" type="primary">recR</name>
    <name type="ordered locus">OTBS_0217</name>
</gene>
<evidence type="ECO:0000255" key="1">
    <source>
        <dbReference type="HAMAP-Rule" id="MF_00017"/>
    </source>
</evidence>
<feature type="chain" id="PRO_1000057156" description="Recombination protein RecR">
    <location>
        <begin position="1"/>
        <end position="203"/>
    </location>
</feature>
<feature type="domain" description="Toprim" evidence="1">
    <location>
        <begin position="81"/>
        <end position="177"/>
    </location>
</feature>
<feature type="zinc finger region" description="C4-type" evidence="1">
    <location>
        <begin position="58"/>
        <end position="73"/>
    </location>
</feature>